<organism>
    <name type="scientific">Blochmanniella floridana</name>
    <dbReference type="NCBI Taxonomy" id="203907"/>
    <lineage>
        <taxon>Bacteria</taxon>
        <taxon>Pseudomonadati</taxon>
        <taxon>Pseudomonadota</taxon>
        <taxon>Gammaproteobacteria</taxon>
        <taxon>Enterobacterales</taxon>
        <taxon>Enterobacteriaceae</taxon>
        <taxon>ant endosymbionts</taxon>
        <taxon>Candidatus Blochmanniella</taxon>
    </lineage>
</organism>
<accession>Q7VR23</accession>
<comment type="function">
    <text evidence="1">Phosphorylation of dTMP to form dTDP in both de novo and salvage pathways of dTTP synthesis.</text>
</comment>
<comment type="catalytic activity">
    <reaction evidence="1">
        <text>dTMP + ATP = dTDP + ADP</text>
        <dbReference type="Rhea" id="RHEA:13517"/>
        <dbReference type="ChEBI" id="CHEBI:30616"/>
        <dbReference type="ChEBI" id="CHEBI:58369"/>
        <dbReference type="ChEBI" id="CHEBI:63528"/>
        <dbReference type="ChEBI" id="CHEBI:456216"/>
        <dbReference type="EC" id="2.7.4.9"/>
    </reaction>
</comment>
<comment type="similarity">
    <text evidence="1">Belongs to the thymidylate kinase family.</text>
</comment>
<protein>
    <recommendedName>
        <fullName evidence="1">Thymidylate kinase</fullName>
        <ecNumber evidence="1">2.7.4.9</ecNumber>
    </recommendedName>
    <alternativeName>
        <fullName evidence="1">dTMP kinase</fullName>
    </alternativeName>
</protein>
<dbReference type="EC" id="2.7.4.9" evidence="1"/>
<dbReference type="EMBL" id="BX248583">
    <property type="protein sequence ID" value="CAD83467.1"/>
    <property type="molecule type" value="Genomic_DNA"/>
</dbReference>
<dbReference type="SMR" id="Q7VR23"/>
<dbReference type="STRING" id="203907.Bfl401"/>
<dbReference type="KEGG" id="bfl:Bfl401"/>
<dbReference type="eggNOG" id="COG0125">
    <property type="taxonomic scope" value="Bacteria"/>
</dbReference>
<dbReference type="HOGENOM" id="CLU_049131_0_1_6"/>
<dbReference type="OrthoDB" id="9774907at2"/>
<dbReference type="Proteomes" id="UP000002192">
    <property type="component" value="Chromosome"/>
</dbReference>
<dbReference type="GO" id="GO:0005829">
    <property type="term" value="C:cytosol"/>
    <property type="evidence" value="ECO:0007669"/>
    <property type="project" value="TreeGrafter"/>
</dbReference>
<dbReference type="GO" id="GO:0005524">
    <property type="term" value="F:ATP binding"/>
    <property type="evidence" value="ECO:0007669"/>
    <property type="project" value="UniProtKB-UniRule"/>
</dbReference>
<dbReference type="GO" id="GO:0004798">
    <property type="term" value="F:dTMP kinase activity"/>
    <property type="evidence" value="ECO:0007669"/>
    <property type="project" value="UniProtKB-UniRule"/>
</dbReference>
<dbReference type="GO" id="GO:0006233">
    <property type="term" value="P:dTDP biosynthetic process"/>
    <property type="evidence" value="ECO:0007669"/>
    <property type="project" value="InterPro"/>
</dbReference>
<dbReference type="GO" id="GO:0006235">
    <property type="term" value="P:dTTP biosynthetic process"/>
    <property type="evidence" value="ECO:0007669"/>
    <property type="project" value="UniProtKB-UniRule"/>
</dbReference>
<dbReference type="GO" id="GO:0006227">
    <property type="term" value="P:dUDP biosynthetic process"/>
    <property type="evidence" value="ECO:0007669"/>
    <property type="project" value="TreeGrafter"/>
</dbReference>
<dbReference type="CDD" id="cd01672">
    <property type="entry name" value="TMPK"/>
    <property type="match status" value="1"/>
</dbReference>
<dbReference type="FunFam" id="3.40.50.300:FF:000225">
    <property type="entry name" value="Thymidylate kinase"/>
    <property type="match status" value="1"/>
</dbReference>
<dbReference type="Gene3D" id="3.40.50.300">
    <property type="entry name" value="P-loop containing nucleotide triphosphate hydrolases"/>
    <property type="match status" value="1"/>
</dbReference>
<dbReference type="HAMAP" id="MF_00165">
    <property type="entry name" value="Thymidylate_kinase"/>
    <property type="match status" value="1"/>
</dbReference>
<dbReference type="InterPro" id="IPR027417">
    <property type="entry name" value="P-loop_NTPase"/>
</dbReference>
<dbReference type="InterPro" id="IPR039430">
    <property type="entry name" value="Thymidylate_kin-like_dom"/>
</dbReference>
<dbReference type="InterPro" id="IPR018095">
    <property type="entry name" value="Thymidylate_kin_CS"/>
</dbReference>
<dbReference type="InterPro" id="IPR018094">
    <property type="entry name" value="Thymidylate_kinase"/>
</dbReference>
<dbReference type="NCBIfam" id="TIGR00041">
    <property type="entry name" value="DTMP_kinase"/>
    <property type="match status" value="1"/>
</dbReference>
<dbReference type="PANTHER" id="PTHR10344">
    <property type="entry name" value="THYMIDYLATE KINASE"/>
    <property type="match status" value="1"/>
</dbReference>
<dbReference type="PANTHER" id="PTHR10344:SF4">
    <property type="entry name" value="UMP-CMP KINASE 2, MITOCHONDRIAL"/>
    <property type="match status" value="1"/>
</dbReference>
<dbReference type="Pfam" id="PF02223">
    <property type="entry name" value="Thymidylate_kin"/>
    <property type="match status" value="1"/>
</dbReference>
<dbReference type="SUPFAM" id="SSF52540">
    <property type="entry name" value="P-loop containing nucleoside triphosphate hydrolases"/>
    <property type="match status" value="1"/>
</dbReference>
<dbReference type="PROSITE" id="PS01331">
    <property type="entry name" value="THYMIDYLATE_KINASE"/>
    <property type="match status" value="1"/>
</dbReference>
<name>KTHY_BLOFL</name>
<evidence type="ECO:0000255" key="1">
    <source>
        <dbReference type="HAMAP-Rule" id="MF_00165"/>
    </source>
</evidence>
<keyword id="KW-0067">ATP-binding</keyword>
<keyword id="KW-0418">Kinase</keyword>
<keyword id="KW-0545">Nucleotide biosynthesis</keyword>
<keyword id="KW-0547">Nucleotide-binding</keyword>
<keyword id="KW-1185">Reference proteome</keyword>
<keyword id="KW-0808">Transferase</keyword>
<reference key="1">
    <citation type="journal article" date="2003" name="Proc. Natl. Acad. Sci. U.S.A.">
        <title>The genome sequence of Blochmannia floridanus: comparative analysis of reduced genomes.</title>
        <authorList>
            <person name="Gil R."/>
            <person name="Silva F.J."/>
            <person name="Zientz E."/>
            <person name="Delmotte F."/>
            <person name="Gonzalez-Candelas F."/>
            <person name="Latorre A."/>
            <person name="Rausell C."/>
            <person name="Kamerbeek J."/>
            <person name="Gadau J."/>
            <person name="Hoelldobler B."/>
            <person name="van Ham R.C.H.J."/>
            <person name="Gross R."/>
            <person name="Moya A."/>
        </authorList>
    </citation>
    <scope>NUCLEOTIDE SEQUENCE [LARGE SCALE GENOMIC DNA]</scope>
</reference>
<gene>
    <name evidence="1" type="primary">tmk</name>
    <name type="ordered locus">Bfl401</name>
</gene>
<proteinExistence type="inferred from homology"/>
<feature type="chain" id="PRO_0000155256" description="Thymidylate kinase">
    <location>
        <begin position="1"/>
        <end position="211"/>
    </location>
</feature>
<feature type="binding site" evidence="1">
    <location>
        <begin position="10"/>
        <end position="17"/>
    </location>
    <ligand>
        <name>ATP</name>
        <dbReference type="ChEBI" id="CHEBI:30616"/>
    </ligand>
</feature>
<sequence length="211" mass="24585">MNNRFIVVEGLDGSGKTTIVHKIVKYFYNQKITNVITTHEPGGTEIAYILSELIKNKSKNEKLTDLSELLMLYAARSQLLENVIKPALFKGDWVIGDRCDLSSFAYQGAGRKLNSVLLNMLSQYVINDFFPKLIFYLDIPSELVLSRIKNRKVLDRIEQESLSFFNRVRSYYRKLAFLKENIIMIDASQPLEQVCVFIYRYLDQWLCDLYK</sequence>